<keyword id="KW-0067">ATP-binding</keyword>
<keyword id="KW-0997">Cell inner membrane</keyword>
<keyword id="KW-1003">Cell membrane</keyword>
<keyword id="KW-0201">Cytochrome c-type biogenesis</keyword>
<keyword id="KW-0472">Membrane</keyword>
<keyword id="KW-0547">Nucleotide-binding</keyword>
<keyword id="KW-1185">Reference proteome</keyword>
<keyword id="KW-1278">Translocase</keyword>
<keyword id="KW-0813">Transport</keyword>
<proteinExistence type="inferred from homology"/>
<dbReference type="EC" id="7.6.2.5" evidence="1"/>
<dbReference type="EMBL" id="CP000248">
    <property type="protein sequence ID" value="ABD25564.1"/>
    <property type="molecule type" value="Genomic_DNA"/>
</dbReference>
<dbReference type="RefSeq" id="WP_011444778.1">
    <property type="nucleotide sequence ID" value="NC_007794.1"/>
</dbReference>
<dbReference type="SMR" id="Q2G9A9"/>
<dbReference type="STRING" id="279238.Saro_1119"/>
<dbReference type="KEGG" id="nar:Saro_1119"/>
<dbReference type="eggNOG" id="COG4133">
    <property type="taxonomic scope" value="Bacteria"/>
</dbReference>
<dbReference type="HOGENOM" id="CLU_000604_1_2_5"/>
<dbReference type="Proteomes" id="UP000009134">
    <property type="component" value="Chromosome"/>
</dbReference>
<dbReference type="GO" id="GO:0005886">
    <property type="term" value="C:plasma membrane"/>
    <property type="evidence" value="ECO:0007669"/>
    <property type="project" value="UniProtKB-SubCell"/>
</dbReference>
<dbReference type="GO" id="GO:0015439">
    <property type="term" value="F:ABC-type heme transporter activity"/>
    <property type="evidence" value="ECO:0007669"/>
    <property type="project" value="UniProtKB-EC"/>
</dbReference>
<dbReference type="GO" id="GO:0005524">
    <property type="term" value="F:ATP binding"/>
    <property type="evidence" value="ECO:0007669"/>
    <property type="project" value="UniProtKB-KW"/>
</dbReference>
<dbReference type="GO" id="GO:0016887">
    <property type="term" value="F:ATP hydrolysis activity"/>
    <property type="evidence" value="ECO:0007669"/>
    <property type="project" value="InterPro"/>
</dbReference>
<dbReference type="GO" id="GO:0017004">
    <property type="term" value="P:cytochrome complex assembly"/>
    <property type="evidence" value="ECO:0007669"/>
    <property type="project" value="UniProtKB-KW"/>
</dbReference>
<dbReference type="Gene3D" id="3.40.50.300">
    <property type="entry name" value="P-loop containing nucleotide triphosphate hydrolases"/>
    <property type="match status" value="1"/>
</dbReference>
<dbReference type="InterPro" id="IPR003593">
    <property type="entry name" value="AAA+_ATPase"/>
</dbReference>
<dbReference type="InterPro" id="IPR003439">
    <property type="entry name" value="ABC_transporter-like_ATP-bd"/>
</dbReference>
<dbReference type="InterPro" id="IPR005895">
    <property type="entry name" value="ABC_transptr_haem_export_CcmA"/>
</dbReference>
<dbReference type="InterPro" id="IPR027417">
    <property type="entry name" value="P-loop_NTPase"/>
</dbReference>
<dbReference type="NCBIfam" id="TIGR01189">
    <property type="entry name" value="ccmA"/>
    <property type="match status" value="1"/>
</dbReference>
<dbReference type="PANTHER" id="PTHR43499">
    <property type="entry name" value="ABC TRANSPORTER I FAMILY MEMBER 1"/>
    <property type="match status" value="1"/>
</dbReference>
<dbReference type="PANTHER" id="PTHR43499:SF1">
    <property type="entry name" value="ABC TRANSPORTER I FAMILY MEMBER 1"/>
    <property type="match status" value="1"/>
</dbReference>
<dbReference type="Pfam" id="PF00005">
    <property type="entry name" value="ABC_tran"/>
    <property type="match status" value="1"/>
</dbReference>
<dbReference type="SMART" id="SM00382">
    <property type="entry name" value="AAA"/>
    <property type="match status" value="1"/>
</dbReference>
<dbReference type="SUPFAM" id="SSF52540">
    <property type="entry name" value="P-loop containing nucleoside triphosphate hydrolases"/>
    <property type="match status" value="1"/>
</dbReference>
<dbReference type="PROSITE" id="PS50893">
    <property type="entry name" value="ABC_TRANSPORTER_2"/>
    <property type="match status" value="1"/>
</dbReference>
<dbReference type="PROSITE" id="PS51243">
    <property type="entry name" value="CCMA"/>
    <property type="match status" value="1"/>
</dbReference>
<organism>
    <name type="scientific">Novosphingobium aromaticivorans (strain ATCC 700278 / DSM 12444 / CCUG 56034 / CIP 105152 / NBRC 16084 / F199)</name>
    <dbReference type="NCBI Taxonomy" id="279238"/>
    <lineage>
        <taxon>Bacteria</taxon>
        <taxon>Pseudomonadati</taxon>
        <taxon>Pseudomonadota</taxon>
        <taxon>Alphaproteobacteria</taxon>
        <taxon>Sphingomonadales</taxon>
        <taxon>Sphingomonadaceae</taxon>
        <taxon>Novosphingobium</taxon>
    </lineage>
</organism>
<comment type="function">
    <text evidence="1">Part of the ABC transporter complex CcmAB involved in the biogenesis of c-type cytochromes; once thought to export heme, this seems not to be the case, but its exact role is uncertain. Responsible for energy coupling to the transport system.</text>
</comment>
<comment type="catalytic activity">
    <reaction evidence="1">
        <text>heme b(in) + ATP + H2O = heme b(out) + ADP + phosphate + H(+)</text>
        <dbReference type="Rhea" id="RHEA:19261"/>
        <dbReference type="ChEBI" id="CHEBI:15377"/>
        <dbReference type="ChEBI" id="CHEBI:15378"/>
        <dbReference type="ChEBI" id="CHEBI:30616"/>
        <dbReference type="ChEBI" id="CHEBI:43474"/>
        <dbReference type="ChEBI" id="CHEBI:60344"/>
        <dbReference type="ChEBI" id="CHEBI:456216"/>
        <dbReference type="EC" id="7.6.2.5"/>
    </reaction>
</comment>
<comment type="subunit">
    <text evidence="1">The complex is composed of two ATP-binding proteins (CcmA) and two transmembrane proteins (CcmB).</text>
</comment>
<comment type="subcellular location">
    <subcellularLocation>
        <location evidence="1">Cell inner membrane</location>
        <topology evidence="1">Peripheral membrane protein</topology>
    </subcellularLocation>
</comment>
<comment type="similarity">
    <text evidence="1">Belongs to the ABC transporter superfamily. CcmA exporter (TC 3.A.1.107) family.</text>
</comment>
<reference key="1">
    <citation type="submission" date="2006-01" db="EMBL/GenBank/DDBJ databases">
        <title>Complete sequence of Novosphingobium aromaticivorans DSM 12444.</title>
        <authorList>
            <consortium name="US DOE Joint Genome Institute"/>
            <person name="Copeland A."/>
            <person name="Lucas S."/>
            <person name="Lapidus A."/>
            <person name="Barry K."/>
            <person name="Detter J.C."/>
            <person name="Glavina T."/>
            <person name="Hammon N."/>
            <person name="Israni S."/>
            <person name="Pitluck S."/>
            <person name="Chain P."/>
            <person name="Malfatti S."/>
            <person name="Shin M."/>
            <person name="Vergez L."/>
            <person name="Schmutz J."/>
            <person name="Larimer F."/>
            <person name="Land M."/>
            <person name="Kyrpides N."/>
            <person name="Ivanova N."/>
            <person name="Fredrickson J."/>
            <person name="Balkwill D."/>
            <person name="Romine M.F."/>
            <person name="Richardson P."/>
        </authorList>
    </citation>
    <scope>NUCLEOTIDE SEQUENCE [LARGE SCALE GENOMIC DNA]</scope>
    <source>
        <strain>ATCC 700278 / DSM 12444 / CCUG 56034 / CIP 105152 / NBRC 16084 / F199</strain>
    </source>
</reference>
<name>CCMA_NOVAD</name>
<feature type="chain" id="PRO_0000271938" description="Cytochrome c biogenesis ATP-binding export protein CcmA">
    <location>
        <begin position="1"/>
        <end position="191"/>
    </location>
</feature>
<feature type="domain" description="ABC transporter" evidence="1">
    <location>
        <begin position="6"/>
        <end position="189"/>
    </location>
</feature>
<feature type="binding site" evidence="1">
    <location>
        <begin position="38"/>
        <end position="45"/>
    </location>
    <ligand>
        <name>ATP</name>
        <dbReference type="ChEBI" id="CHEBI:30616"/>
    </ligand>
</feature>
<sequence>MQECGLVATDIACRRGDRILFRALSLDVKAGEIVHLAGANGIGKSSLIRILAGLLRPFAGTVERRGAIALSDERLALDGHLPLEDALRFWDRIDRAGRPEAEFGLDDLLDVPVRYLSTGQRKRAALARVAASGAPLWLLDEPLNGLDVHWSERAQEAIEAHCARGGAVVIASHQPLALERVRTLAIRNFQP</sequence>
<evidence type="ECO:0000255" key="1">
    <source>
        <dbReference type="HAMAP-Rule" id="MF_01707"/>
    </source>
</evidence>
<accession>Q2G9A9</accession>
<protein>
    <recommendedName>
        <fullName evidence="1">Cytochrome c biogenesis ATP-binding export protein CcmA</fullName>
        <ecNumber evidence="1">7.6.2.5</ecNumber>
    </recommendedName>
    <alternativeName>
        <fullName evidence="1">Heme exporter protein A</fullName>
    </alternativeName>
</protein>
<gene>
    <name evidence="1" type="primary">ccmA</name>
    <name type="ordered locus">Saro_1119</name>
</gene>